<keyword id="KW-0012">Acyltransferase</keyword>
<keyword id="KW-0133">Cell shape</keyword>
<keyword id="KW-0961">Cell wall biogenesis/degradation</keyword>
<keyword id="KW-0963">Cytoplasm</keyword>
<keyword id="KW-0460">Magnesium</keyword>
<keyword id="KW-0479">Metal-binding</keyword>
<keyword id="KW-0511">Multifunctional enzyme</keyword>
<keyword id="KW-0548">Nucleotidyltransferase</keyword>
<keyword id="KW-0573">Peptidoglycan synthesis</keyword>
<keyword id="KW-1185">Reference proteome</keyword>
<keyword id="KW-0677">Repeat</keyword>
<keyword id="KW-0808">Transferase</keyword>
<reference key="1">
    <citation type="journal article" date="2004" name="Mol. Plant Microbe Interact.">
        <title>The genome sequence of the Gram-positive sugarcane pathogen Leifsonia xyli subsp. xyli.</title>
        <authorList>
            <person name="Monteiro-Vitorello C.B."/>
            <person name="Camargo L.E.A."/>
            <person name="Van Sluys M.A."/>
            <person name="Kitajima J.P."/>
            <person name="Truffi D."/>
            <person name="do Amaral A.M."/>
            <person name="Harakava R."/>
            <person name="de Oliveira J.C.F."/>
            <person name="Wood D."/>
            <person name="de Oliveira M.C."/>
            <person name="Miyaki C.Y."/>
            <person name="Takita M.A."/>
            <person name="da Silva A.C.R."/>
            <person name="Furlan L.R."/>
            <person name="Carraro D.M."/>
            <person name="Camarotte G."/>
            <person name="Almeida N.F. Jr."/>
            <person name="Carrer H."/>
            <person name="Coutinho L.L."/>
            <person name="El-Dorry H.A."/>
            <person name="Ferro M.I.T."/>
            <person name="Gagliardi P.R."/>
            <person name="Giglioti E."/>
            <person name="Goldman M.H.S."/>
            <person name="Goldman G.H."/>
            <person name="Kimura E.T."/>
            <person name="Ferro E.S."/>
            <person name="Kuramae E.E."/>
            <person name="Lemos E.G.M."/>
            <person name="Lemos M.V.F."/>
            <person name="Mauro S.M.Z."/>
            <person name="Machado M.A."/>
            <person name="Marino C.L."/>
            <person name="Menck C.F."/>
            <person name="Nunes L.R."/>
            <person name="Oliveira R.C."/>
            <person name="Pereira G.G."/>
            <person name="Siqueira W."/>
            <person name="de Souza A.A."/>
            <person name="Tsai S.M."/>
            <person name="Zanca A.S."/>
            <person name="Simpson A.J.G."/>
            <person name="Brumbley S.M."/>
            <person name="Setubal J.C."/>
        </authorList>
    </citation>
    <scope>NUCLEOTIDE SEQUENCE [LARGE SCALE GENOMIC DNA]</scope>
    <source>
        <strain>CTCB07</strain>
    </source>
</reference>
<accession>Q6ADP6</accession>
<protein>
    <recommendedName>
        <fullName evidence="1">Bifunctional protein GlmU</fullName>
    </recommendedName>
    <domain>
        <recommendedName>
            <fullName evidence="1">UDP-N-acetylglucosamine pyrophosphorylase</fullName>
            <ecNumber evidence="1">2.7.7.23</ecNumber>
        </recommendedName>
        <alternativeName>
            <fullName evidence="1">N-acetylglucosamine-1-phosphate uridyltransferase</fullName>
        </alternativeName>
    </domain>
    <domain>
        <recommendedName>
            <fullName evidence="1">Glucosamine-1-phosphate N-acetyltransferase</fullName>
            <ecNumber evidence="1">2.3.1.157</ecNumber>
        </recommendedName>
    </domain>
</protein>
<dbReference type="EC" id="2.7.7.23" evidence="1"/>
<dbReference type="EC" id="2.3.1.157" evidence="1"/>
<dbReference type="EMBL" id="AE016822">
    <property type="protein sequence ID" value="AAT89500.1"/>
    <property type="status" value="ALT_INIT"/>
    <property type="molecule type" value="Genomic_DNA"/>
</dbReference>
<dbReference type="RefSeq" id="WP_041767647.1">
    <property type="nucleotide sequence ID" value="NC_006087.1"/>
</dbReference>
<dbReference type="SMR" id="Q6ADP6"/>
<dbReference type="STRING" id="281090.Lxx17430"/>
<dbReference type="KEGG" id="lxx:Lxx17430"/>
<dbReference type="eggNOG" id="COG1207">
    <property type="taxonomic scope" value="Bacteria"/>
</dbReference>
<dbReference type="HOGENOM" id="CLU_029499_15_2_11"/>
<dbReference type="UniPathway" id="UPA00113">
    <property type="reaction ID" value="UER00532"/>
</dbReference>
<dbReference type="UniPathway" id="UPA00113">
    <property type="reaction ID" value="UER00533"/>
</dbReference>
<dbReference type="UniPathway" id="UPA00973"/>
<dbReference type="Proteomes" id="UP000001306">
    <property type="component" value="Chromosome"/>
</dbReference>
<dbReference type="GO" id="GO:0005737">
    <property type="term" value="C:cytoplasm"/>
    <property type="evidence" value="ECO:0007669"/>
    <property type="project" value="UniProtKB-SubCell"/>
</dbReference>
<dbReference type="GO" id="GO:0016020">
    <property type="term" value="C:membrane"/>
    <property type="evidence" value="ECO:0007669"/>
    <property type="project" value="GOC"/>
</dbReference>
<dbReference type="GO" id="GO:0019134">
    <property type="term" value="F:glucosamine-1-phosphate N-acetyltransferase activity"/>
    <property type="evidence" value="ECO:0007669"/>
    <property type="project" value="UniProtKB-UniRule"/>
</dbReference>
<dbReference type="GO" id="GO:0000287">
    <property type="term" value="F:magnesium ion binding"/>
    <property type="evidence" value="ECO:0007669"/>
    <property type="project" value="UniProtKB-UniRule"/>
</dbReference>
<dbReference type="GO" id="GO:0003977">
    <property type="term" value="F:UDP-N-acetylglucosamine diphosphorylase activity"/>
    <property type="evidence" value="ECO:0007669"/>
    <property type="project" value="UniProtKB-UniRule"/>
</dbReference>
<dbReference type="GO" id="GO:0000902">
    <property type="term" value="P:cell morphogenesis"/>
    <property type="evidence" value="ECO:0007669"/>
    <property type="project" value="UniProtKB-UniRule"/>
</dbReference>
<dbReference type="GO" id="GO:0071555">
    <property type="term" value="P:cell wall organization"/>
    <property type="evidence" value="ECO:0007669"/>
    <property type="project" value="UniProtKB-KW"/>
</dbReference>
<dbReference type="GO" id="GO:0009245">
    <property type="term" value="P:lipid A biosynthetic process"/>
    <property type="evidence" value="ECO:0007669"/>
    <property type="project" value="UniProtKB-UniRule"/>
</dbReference>
<dbReference type="GO" id="GO:0009252">
    <property type="term" value="P:peptidoglycan biosynthetic process"/>
    <property type="evidence" value="ECO:0007669"/>
    <property type="project" value="UniProtKB-UniRule"/>
</dbReference>
<dbReference type="GO" id="GO:0008360">
    <property type="term" value="P:regulation of cell shape"/>
    <property type="evidence" value="ECO:0007669"/>
    <property type="project" value="UniProtKB-KW"/>
</dbReference>
<dbReference type="GO" id="GO:0006048">
    <property type="term" value="P:UDP-N-acetylglucosamine biosynthetic process"/>
    <property type="evidence" value="ECO:0007669"/>
    <property type="project" value="UniProtKB-UniPathway"/>
</dbReference>
<dbReference type="CDD" id="cd02540">
    <property type="entry name" value="GT2_GlmU_N_bac"/>
    <property type="match status" value="1"/>
</dbReference>
<dbReference type="CDD" id="cd03353">
    <property type="entry name" value="LbH_GlmU_C"/>
    <property type="match status" value="1"/>
</dbReference>
<dbReference type="Gene3D" id="2.160.10.10">
    <property type="entry name" value="Hexapeptide repeat proteins"/>
    <property type="match status" value="1"/>
</dbReference>
<dbReference type="Gene3D" id="3.90.550.10">
    <property type="entry name" value="Spore Coat Polysaccharide Biosynthesis Protein SpsA, Chain A"/>
    <property type="match status" value="1"/>
</dbReference>
<dbReference type="HAMAP" id="MF_01631">
    <property type="entry name" value="GlmU"/>
    <property type="match status" value="1"/>
</dbReference>
<dbReference type="InterPro" id="IPR005882">
    <property type="entry name" value="Bifunctional_GlmU"/>
</dbReference>
<dbReference type="InterPro" id="IPR050065">
    <property type="entry name" value="GlmU-like"/>
</dbReference>
<dbReference type="InterPro" id="IPR038009">
    <property type="entry name" value="GlmU_C_LbH"/>
</dbReference>
<dbReference type="InterPro" id="IPR025877">
    <property type="entry name" value="MobA-like_NTP_Trfase"/>
</dbReference>
<dbReference type="InterPro" id="IPR029044">
    <property type="entry name" value="Nucleotide-diphossugar_trans"/>
</dbReference>
<dbReference type="InterPro" id="IPR011004">
    <property type="entry name" value="Trimer_LpxA-like_sf"/>
</dbReference>
<dbReference type="NCBIfam" id="TIGR01173">
    <property type="entry name" value="glmU"/>
    <property type="match status" value="1"/>
</dbReference>
<dbReference type="NCBIfam" id="NF010932">
    <property type="entry name" value="PRK14352.1"/>
    <property type="match status" value="1"/>
</dbReference>
<dbReference type="PANTHER" id="PTHR43584:SF3">
    <property type="entry name" value="BIFUNCTIONAL PROTEIN GLMU"/>
    <property type="match status" value="1"/>
</dbReference>
<dbReference type="PANTHER" id="PTHR43584">
    <property type="entry name" value="NUCLEOTIDYL TRANSFERASE"/>
    <property type="match status" value="1"/>
</dbReference>
<dbReference type="Pfam" id="PF12804">
    <property type="entry name" value="NTP_transf_3"/>
    <property type="match status" value="1"/>
</dbReference>
<dbReference type="SUPFAM" id="SSF53448">
    <property type="entry name" value="Nucleotide-diphospho-sugar transferases"/>
    <property type="match status" value="1"/>
</dbReference>
<dbReference type="SUPFAM" id="SSF51161">
    <property type="entry name" value="Trimeric LpxA-like enzymes"/>
    <property type="match status" value="1"/>
</dbReference>
<feature type="chain" id="PRO_0000233793" description="Bifunctional protein GlmU">
    <location>
        <begin position="1"/>
        <end position="486"/>
    </location>
</feature>
<feature type="region of interest" description="Pyrophosphorylase" evidence="1">
    <location>
        <begin position="1"/>
        <end position="236"/>
    </location>
</feature>
<feature type="region of interest" description="Linker" evidence="1">
    <location>
        <begin position="237"/>
        <end position="257"/>
    </location>
</feature>
<feature type="region of interest" description="N-acetyltransferase" evidence="1">
    <location>
        <begin position="258"/>
        <end position="486"/>
    </location>
</feature>
<feature type="region of interest" description="Disordered" evidence="2">
    <location>
        <begin position="459"/>
        <end position="486"/>
    </location>
</feature>
<feature type="compositionally biased region" description="Low complexity" evidence="2">
    <location>
        <begin position="465"/>
        <end position="486"/>
    </location>
</feature>
<feature type="active site" description="Proton acceptor" evidence="1">
    <location>
        <position position="369"/>
    </location>
</feature>
<feature type="binding site" evidence="1">
    <location>
        <begin position="11"/>
        <end position="14"/>
    </location>
    <ligand>
        <name>UDP-N-acetyl-alpha-D-glucosamine</name>
        <dbReference type="ChEBI" id="CHEBI:57705"/>
    </ligand>
</feature>
<feature type="binding site" evidence="1">
    <location>
        <position position="25"/>
    </location>
    <ligand>
        <name>UDP-N-acetyl-alpha-D-glucosamine</name>
        <dbReference type="ChEBI" id="CHEBI:57705"/>
    </ligand>
</feature>
<feature type="binding site" evidence="1">
    <location>
        <position position="78"/>
    </location>
    <ligand>
        <name>UDP-N-acetyl-alpha-D-glucosamine</name>
        <dbReference type="ChEBI" id="CHEBI:57705"/>
    </ligand>
</feature>
<feature type="binding site" evidence="1">
    <location>
        <begin position="83"/>
        <end position="84"/>
    </location>
    <ligand>
        <name>UDP-N-acetyl-alpha-D-glucosamine</name>
        <dbReference type="ChEBI" id="CHEBI:57705"/>
    </ligand>
</feature>
<feature type="binding site" evidence="1">
    <location>
        <position position="109"/>
    </location>
    <ligand>
        <name>Mg(2+)</name>
        <dbReference type="ChEBI" id="CHEBI:18420"/>
    </ligand>
</feature>
<feature type="binding site" evidence="1">
    <location>
        <position position="146"/>
    </location>
    <ligand>
        <name>UDP-N-acetyl-alpha-D-glucosamine</name>
        <dbReference type="ChEBI" id="CHEBI:57705"/>
    </ligand>
</feature>
<feature type="binding site" evidence="1">
    <location>
        <position position="161"/>
    </location>
    <ligand>
        <name>UDP-N-acetyl-alpha-D-glucosamine</name>
        <dbReference type="ChEBI" id="CHEBI:57705"/>
    </ligand>
</feature>
<feature type="binding site" evidence="1">
    <location>
        <position position="176"/>
    </location>
    <ligand>
        <name>UDP-N-acetyl-alpha-D-glucosamine</name>
        <dbReference type="ChEBI" id="CHEBI:57705"/>
    </ligand>
</feature>
<feature type="binding site" evidence="1">
    <location>
        <position position="234"/>
    </location>
    <ligand>
        <name>Mg(2+)</name>
        <dbReference type="ChEBI" id="CHEBI:18420"/>
    </ligand>
</feature>
<feature type="binding site" evidence="1">
    <location>
        <position position="234"/>
    </location>
    <ligand>
        <name>UDP-N-acetyl-alpha-D-glucosamine</name>
        <dbReference type="ChEBI" id="CHEBI:57705"/>
    </ligand>
</feature>
<feature type="binding site" evidence="1">
    <location>
        <position position="339"/>
    </location>
    <ligand>
        <name>UDP-N-acetyl-alpha-D-glucosamine</name>
        <dbReference type="ChEBI" id="CHEBI:57705"/>
    </ligand>
</feature>
<feature type="binding site" evidence="1">
    <location>
        <position position="357"/>
    </location>
    <ligand>
        <name>UDP-N-acetyl-alpha-D-glucosamine</name>
        <dbReference type="ChEBI" id="CHEBI:57705"/>
    </ligand>
</feature>
<feature type="binding site" evidence="1">
    <location>
        <position position="372"/>
    </location>
    <ligand>
        <name>UDP-N-acetyl-alpha-D-glucosamine</name>
        <dbReference type="ChEBI" id="CHEBI:57705"/>
    </ligand>
</feature>
<feature type="binding site" evidence="1">
    <location>
        <position position="383"/>
    </location>
    <ligand>
        <name>UDP-N-acetyl-alpha-D-glucosamine</name>
        <dbReference type="ChEBI" id="CHEBI:57705"/>
    </ligand>
</feature>
<feature type="binding site" evidence="1">
    <location>
        <position position="386"/>
    </location>
    <ligand>
        <name>acetyl-CoA</name>
        <dbReference type="ChEBI" id="CHEBI:57288"/>
    </ligand>
</feature>
<feature type="binding site" evidence="1">
    <location>
        <begin position="392"/>
        <end position="393"/>
    </location>
    <ligand>
        <name>acetyl-CoA</name>
        <dbReference type="ChEBI" id="CHEBI:57288"/>
    </ligand>
</feature>
<feature type="binding site" evidence="1">
    <location>
        <position position="429"/>
    </location>
    <ligand>
        <name>acetyl-CoA</name>
        <dbReference type="ChEBI" id="CHEBI:57288"/>
    </ligand>
</feature>
<name>GLMU_LEIXX</name>
<proteinExistence type="inferred from homology"/>
<evidence type="ECO:0000255" key="1">
    <source>
        <dbReference type="HAMAP-Rule" id="MF_01631"/>
    </source>
</evidence>
<evidence type="ECO:0000256" key="2">
    <source>
        <dbReference type="SAM" id="MobiDB-lite"/>
    </source>
</evidence>
<evidence type="ECO:0000305" key="3"/>
<organism>
    <name type="scientific">Leifsonia xyli subsp. xyli (strain CTCB07)</name>
    <dbReference type="NCBI Taxonomy" id="281090"/>
    <lineage>
        <taxon>Bacteria</taxon>
        <taxon>Bacillati</taxon>
        <taxon>Actinomycetota</taxon>
        <taxon>Actinomycetes</taxon>
        <taxon>Micrococcales</taxon>
        <taxon>Microbacteriaceae</taxon>
        <taxon>Leifsonia</taxon>
    </lineage>
</organism>
<comment type="function">
    <text evidence="1">Catalyzes the last two sequential reactions in the de novo biosynthetic pathway for UDP-N-acetylglucosamine (UDP-GlcNAc). The C-terminal domain catalyzes the transfer of acetyl group from acetyl coenzyme A to glucosamine-1-phosphate (GlcN-1-P) to produce N-acetylglucosamine-1-phosphate (GlcNAc-1-P), which is converted into UDP-GlcNAc by the transfer of uridine 5-monophosphate (from uridine 5-triphosphate), a reaction catalyzed by the N-terminal domain.</text>
</comment>
<comment type="catalytic activity">
    <reaction evidence="1">
        <text>alpha-D-glucosamine 1-phosphate + acetyl-CoA = N-acetyl-alpha-D-glucosamine 1-phosphate + CoA + H(+)</text>
        <dbReference type="Rhea" id="RHEA:13725"/>
        <dbReference type="ChEBI" id="CHEBI:15378"/>
        <dbReference type="ChEBI" id="CHEBI:57287"/>
        <dbReference type="ChEBI" id="CHEBI:57288"/>
        <dbReference type="ChEBI" id="CHEBI:57776"/>
        <dbReference type="ChEBI" id="CHEBI:58516"/>
        <dbReference type="EC" id="2.3.1.157"/>
    </reaction>
</comment>
<comment type="catalytic activity">
    <reaction evidence="1">
        <text>N-acetyl-alpha-D-glucosamine 1-phosphate + UTP + H(+) = UDP-N-acetyl-alpha-D-glucosamine + diphosphate</text>
        <dbReference type="Rhea" id="RHEA:13509"/>
        <dbReference type="ChEBI" id="CHEBI:15378"/>
        <dbReference type="ChEBI" id="CHEBI:33019"/>
        <dbReference type="ChEBI" id="CHEBI:46398"/>
        <dbReference type="ChEBI" id="CHEBI:57705"/>
        <dbReference type="ChEBI" id="CHEBI:57776"/>
        <dbReference type="EC" id="2.7.7.23"/>
    </reaction>
</comment>
<comment type="cofactor">
    <cofactor evidence="1">
        <name>Mg(2+)</name>
        <dbReference type="ChEBI" id="CHEBI:18420"/>
    </cofactor>
    <text evidence="1">Binds 1 Mg(2+) ion per subunit.</text>
</comment>
<comment type="pathway">
    <text evidence="1">Nucleotide-sugar biosynthesis; UDP-N-acetyl-alpha-D-glucosamine biosynthesis; N-acetyl-alpha-D-glucosamine 1-phosphate from alpha-D-glucosamine 6-phosphate (route II): step 2/2.</text>
</comment>
<comment type="pathway">
    <text evidence="1">Nucleotide-sugar biosynthesis; UDP-N-acetyl-alpha-D-glucosamine biosynthesis; UDP-N-acetyl-alpha-D-glucosamine from N-acetyl-alpha-D-glucosamine 1-phosphate: step 1/1.</text>
</comment>
<comment type="pathway">
    <text evidence="1">Bacterial outer membrane biogenesis; LPS lipid A biosynthesis.</text>
</comment>
<comment type="subunit">
    <text evidence="1">Homotrimer.</text>
</comment>
<comment type="subcellular location">
    <subcellularLocation>
        <location evidence="1">Cytoplasm</location>
    </subcellularLocation>
</comment>
<comment type="similarity">
    <text evidence="1">In the N-terminal section; belongs to the N-acetylglucosamine-1-phosphate uridyltransferase family.</text>
</comment>
<comment type="similarity">
    <text evidence="1">In the C-terminal section; belongs to the transferase hexapeptide repeat family.</text>
</comment>
<comment type="sequence caution" evidence="3">
    <conflict type="erroneous initiation">
        <sequence resource="EMBL-CDS" id="AAT89500"/>
    </conflict>
</comment>
<sequence length="486" mass="50054">MTDQNLAIVVLAAGQGTRMKSATPKLLHPLGGIPVIAHVLETARALEAAEVVAVVRHERDRLAEVIGVELPEAVIVDQDEVPGTGRAVEQAVAALPADFSGDVLVVNGDVPLLDAGTLRELIAAHRAGGSAATILSAFPAVAAGYGRIVRTSTGRLDRIVEHKDATEAERAIGEINAGIYVFGAAALRDKLAAITTDNAQGEKYITDVIGLLRESGFDVDALPVSDSWLVDGINDRAQLSEAAAKLNALTVRAWQLAGVTVQDPATTWIDVRVRLAPDVTLLPGTQLRGATAVETGATIGPDTTLLDTEVGAGATVKRTDATLAVIGAAATVGPFAYLRPGTVLGADGKIGTFVETKNAVIGAGAKLAHFNYVGDAEVGEKSNLGAGVITANYDGVNKHRTEIGSHVRVATNTVFVAPVRMGDGAYTGAGTVVRKDVPAGSLAVTVAPQRNIEGWVAQRRPGTDAARAAQRNGAAEASNAAEESGE</sequence>
<gene>
    <name evidence="1" type="primary">glmU</name>
    <name type="ordered locus">Lxx17430</name>
</gene>